<comment type="function">
    <text evidence="1">Proton-coupled chloride transporter. Functions as antiport system and exchanges two chloride ions for 1 proton. Probably acts as an electrical shunt for an outwardly-directed proton pump that is linked to amino acid decarboxylation, as part of the extreme acid resistance (XAR) response.</text>
</comment>
<comment type="catalytic activity">
    <reaction evidence="1">
        <text>2 chloride(in) + H(+)(out) = 2 chloride(out) + H(+)(in)</text>
        <dbReference type="Rhea" id="RHEA:29567"/>
        <dbReference type="ChEBI" id="CHEBI:15378"/>
        <dbReference type="ChEBI" id="CHEBI:17996"/>
    </reaction>
</comment>
<comment type="subunit">
    <text evidence="1">Homodimer.</text>
</comment>
<comment type="subcellular location">
    <subcellularLocation>
        <location evidence="1">Cell inner membrane</location>
        <topology evidence="1">Multi-pass membrane protein</topology>
    </subcellularLocation>
</comment>
<comment type="similarity">
    <text evidence="1">Belongs to the chloride channel (TC 2.A.49) family. ClcA subfamily.</text>
</comment>
<sequence>MSTRETFKISLLAKMPKDVINQFLSKDKTPFSVLFLSLLVGILAGLVGTYFEQAVHLVSETRTDWLKSEIGSFLPLWLAAFLISAFLAFIGYFLVHRFAPEAAGSGIPEIEGAMDGMRPVRWWRVLPVKFFGGMGALGSGMVLGREGPTVQMGGAVGRMISDIFRVKNEDTRHSLLAAGAAGGLAAAFNAPLAGIMFVIEEMRPQFRYTLISVRAVIISAVAANIVFRVINGQDAVITMPQYDAPELSTLGLFLLLGALFGVFGVLFNYLITLAQDLFVKFHRNDRKRYLLTGSMIGGCFGLLLLYVPELTGGGISLIPTITNGGYGAGILLLLFVGRIFTTLLCFGSGAPGGIFAPMLALGTLFGYAFGLIAKMWFPELNIEPGMFAIAGMGALFAATVRAPITGILLVIEMTNNYHLILPLIITSLGAVIFAQLLGGQPIYSQLLHRTLKNQKLQQQDLPPQSPNS</sequence>
<dbReference type="EMBL" id="AE003853">
    <property type="protein sequence ID" value="AAF96429.1"/>
    <property type="molecule type" value="Genomic_DNA"/>
</dbReference>
<dbReference type="PIR" id="C82449">
    <property type="entry name" value="C82449"/>
</dbReference>
<dbReference type="RefSeq" id="NP_232917.1">
    <property type="nucleotide sequence ID" value="NC_002506.1"/>
</dbReference>
<dbReference type="RefSeq" id="WP_000107451.1">
    <property type="nucleotide sequence ID" value="NZ_LT906615.1"/>
</dbReference>
<dbReference type="SMR" id="Q9KM62"/>
<dbReference type="STRING" id="243277.VC_A0526"/>
<dbReference type="DNASU" id="2612726"/>
<dbReference type="EnsemblBacteria" id="AAF96429">
    <property type="protein sequence ID" value="AAF96429"/>
    <property type="gene ID" value="VC_A0526"/>
</dbReference>
<dbReference type="KEGG" id="vch:VC_A0526"/>
<dbReference type="PATRIC" id="fig|243277.26.peg.3151"/>
<dbReference type="eggNOG" id="COG0038">
    <property type="taxonomic scope" value="Bacteria"/>
</dbReference>
<dbReference type="HOGENOM" id="CLU_015263_7_0_6"/>
<dbReference type="PHI-base" id="PHI:8485"/>
<dbReference type="Proteomes" id="UP000000584">
    <property type="component" value="Chromosome 2"/>
</dbReference>
<dbReference type="GO" id="GO:0005886">
    <property type="term" value="C:plasma membrane"/>
    <property type="evidence" value="ECO:0000318"/>
    <property type="project" value="GO_Central"/>
</dbReference>
<dbReference type="GO" id="GO:0015297">
    <property type="term" value="F:antiporter activity"/>
    <property type="evidence" value="ECO:0007669"/>
    <property type="project" value="UniProtKB-UniRule"/>
</dbReference>
<dbReference type="GO" id="GO:0005247">
    <property type="term" value="F:voltage-gated chloride channel activity"/>
    <property type="evidence" value="ECO:0000318"/>
    <property type="project" value="GO_Central"/>
</dbReference>
<dbReference type="CDD" id="cd01031">
    <property type="entry name" value="EriC"/>
    <property type="match status" value="1"/>
</dbReference>
<dbReference type="Gene3D" id="1.10.3080.10">
    <property type="entry name" value="Clc chloride channel"/>
    <property type="match status" value="1"/>
</dbReference>
<dbReference type="HAMAP" id="MF_01128">
    <property type="entry name" value="CLC_ClcA"/>
    <property type="match status" value="1"/>
</dbReference>
<dbReference type="InterPro" id="IPR023861">
    <property type="entry name" value="Cl-channel_ClcA"/>
</dbReference>
<dbReference type="InterPro" id="IPR014743">
    <property type="entry name" value="Cl-channel_core"/>
</dbReference>
<dbReference type="InterPro" id="IPR001807">
    <property type="entry name" value="ClC"/>
</dbReference>
<dbReference type="NCBIfam" id="NF003640">
    <property type="entry name" value="PRK05277.1"/>
    <property type="match status" value="1"/>
</dbReference>
<dbReference type="PANTHER" id="PTHR45711">
    <property type="entry name" value="CHLORIDE CHANNEL PROTEIN"/>
    <property type="match status" value="1"/>
</dbReference>
<dbReference type="PANTHER" id="PTHR45711:SF6">
    <property type="entry name" value="CHLORIDE CHANNEL PROTEIN"/>
    <property type="match status" value="1"/>
</dbReference>
<dbReference type="Pfam" id="PF00654">
    <property type="entry name" value="Voltage_CLC"/>
    <property type="match status" value="1"/>
</dbReference>
<dbReference type="PRINTS" id="PR00762">
    <property type="entry name" value="CLCHANNEL"/>
</dbReference>
<dbReference type="SUPFAM" id="SSF81340">
    <property type="entry name" value="Clc chloride channel"/>
    <property type="match status" value="1"/>
</dbReference>
<keyword id="KW-0050">Antiport</keyword>
<keyword id="KW-0997">Cell inner membrane</keyword>
<keyword id="KW-1003">Cell membrane</keyword>
<keyword id="KW-0868">Chloride</keyword>
<keyword id="KW-0406">Ion transport</keyword>
<keyword id="KW-0472">Membrane</keyword>
<keyword id="KW-1185">Reference proteome</keyword>
<keyword id="KW-0812">Transmembrane</keyword>
<keyword id="KW-1133">Transmembrane helix</keyword>
<keyword id="KW-0813">Transport</keyword>
<name>CLCA_VIBCH</name>
<organism>
    <name type="scientific">Vibrio cholerae serotype O1 (strain ATCC 39315 / El Tor Inaba N16961)</name>
    <dbReference type="NCBI Taxonomy" id="243277"/>
    <lineage>
        <taxon>Bacteria</taxon>
        <taxon>Pseudomonadati</taxon>
        <taxon>Pseudomonadota</taxon>
        <taxon>Gammaproteobacteria</taxon>
        <taxon>Vibrionales</taxon>
        <taxon>Vibrionaceae</taxon>
        <taxon>Vibrio</taxon>
    </lineage>
</organism>
<protein>
    <recommendedName>
        <fullName evidence="1">H(+)/Cl(-) exchange transporter ClcA</fullName>
    </recommendedName>
</protein>
<accession>Q9KM62</accession>
<proteinExistence type="inferred from homology"/>
<feature type="chain" id="PRO_0000094480" description="H(+)/Cl(-) exchange transporter ClcA">
    <location>
        <begin position="1"/>
        <end position="468"/>
    </location>
</feature>
<feature type="topological domain" description="Cytoplasmic" evidence="1">
    <location>
        <begin position="1"/>
        <end position="30"/>
    </location>
</feature>
<feature type="transmembrane region" description="Helical" evidence="1">
    <location>
        <begin position="31"/>
        <end position="67"/>
    </location>
</feature>
<feature type="topological domain" description="Periplasmic" evidence="1">
    <location>
        <begin position="68"/>
        <end position="74"/>
    </location>
</feature>
<feature type="transmembrane region" description="Helical" evidence="1">
    <location>
        <begin position="75"/>
        <end position="98"/>
    </location>
</feature>
<feature type="intramembrane region" description="Helical" evidence="1">
    <location>
        <begin position="107"/>
        <end position="114"/>
    </location>
</feature>
<feature type="topological domain" description="Cytoplasmic" evidence="1">
    <location>
        <begin position="115"/>
        <end position="121"/>
    </location>
</feature>
<feature type="transmembrane region" description="Helical" evidence="1">
    <location>
        <begin position="122"/>
        <end position="139"/>
    </location>
</feature>
<feature type="transmembrane region" description="Helical" evidence="1">
    <location>
        <begin position="146"/>
        <end position="164"/>
    </location>
</feature>
<feature type="topological domain" description="Cytoplasmic" evidence="1">
    <location>
        <begin position="165"/>
        <end position="174"/>
    </location>
</feature>
<feature type="intramembrane region" description="Helical" evidence="1">
    <location>
        <begin position="175"/>
        <end position="187"/>
    </location>
</feature>
<feature type="intramembrane region" description="Helical" evidence="1">
    <location>
        <begin position="191"/>
        <end position="199"/>
    </location>
</feature>
<feature type="topological domain" description="Cytoplasmic" evidence="1">
    <location>
        <begin position="200"/>
        <end position="212"/>
    </location>
</feature>
<feature type="transmembrane region" description="Helical" evidence="1">
    <location>
        <begin position="213"/>
        <end position="230"/>
    </location>
</feature>
<feature type="topological domain" description="Periplasmic" evidence="1">
    <location>
        <begin position="231"/>
        <end position="250"/>
    </location>
</feature>
<feature type="transmembrane region" description="Helical" evidence="1">
    <location>
        <begin position="251"/>
        <end position="279"/>
    </location>
</feature>
<feature type="topological domain" description="Cytoplasmic" evidence="1">
    <location>
        <begin position="280"/>
        <end position="285"/>
    </location>
</feature>
<feature type="transmembrane region" description="Helical" evidence="1">
    <location>
        <begin position="286"/>
        <end position="307"/>
    </location>
</feature>
<feature type="topological domain" description="Periplasmic" evidence="1">
    <location>
        <begin position="308"/>
        <end position="327"/>
    </location>
</feature>
<feature type="transmembrane region" description="Helical" evidence="1">
    <location>
        <begin position="328"/>
        <end position="347"/>
    </location>
</feature>
<feature type="transmembrane region" description="Helical" evidence="1">
    <location>
        <begin position="353"/>
        <end position="374"/>
    </location>
</feature>
<feature type="topological domain" description="Periplasmic" evidence="1">
    <location>
        <begin position="375"/>
        <end position="384"/>
    </location>
</feature>
<feature type="intramembrane region" description="Helical" evidence="1">
    <location>
        <begin position="385"/>
        <end position="399"/>
    </location>
</feature>
<feature type="intramembrane region" description="Note=Loop between two helices" evidence="1">
    <location>
        <begin position="400"/>
        <end position="402"/>
    </location>
</feature>
<feature type="intramembrane region" description="Helical" evidence="1">
    <location>
        <begin position="403"/>
        <end position="414"/>
    </location>
</feature>
<feature type="intramembrane region" description="Note=Loop between two helices" evidence="1">
    <location>
        <begin position="415"/>
        <end position="419"/>
    </location>
</feature>
<feature type="transmembrane region" description="Helical" evidence="1">
    <location>
        <begin position="420"/>
        <end position="436"/>
    </location>
</feature>
<feature type="topological domain" description="Cytoplasmic" evidence="1">
    <location>
        <begin position="437"/>
        <end position="468"/>
    </location>
</feature>
<feature type="short sequence motif" description="Selectivity filter part_1" evidence="1">
    <location>
        <begin position="104"/>
        <end position="108"/>
    </location>
</feature>
<feature type="short sequence motif" description="Selectivity filter part_2" evidence="1">
    <location>
        <begin position="144"/>
        <end position="148"/>
    </location>
</feature>
<feature type="short sequence motif" description="Selectivity filter part_3" evidence="1">
    <location>
        <begin position="353"/>
        <end position="357"/>
    </location>
</feature>
<feature type="binding site" evidence="1">
    <location>
        <position position="105"/>
    </location>
    <ligand>
        <name>chloride</name>
        <dbReference type="ChEBI" id="CHEBI:17996"/>
    </ligand>
</feature>
<feature type="binding site" evidence="1">
    <location>
        <position position="354"/>
    </location>
    <ligand>
        <name>chloride</name>
        <dbReference type="ChEBI" id="CHEBI:17996"/>
    </ligand>
</feature>
<feature type="binding site" evidence="1">
    <location>
        <position position="355"/>
    </location>
    <ligand>
        <name>chloride</name>
        <dbReference type="ChEBI" id="CHEBI:17996"/>
    </ligand>
</feature>
<feature type="binding site" evidence="1">
    <location>
        <position position="443"/>
    </location>
    <ligand>
        <name>chloride</name>
        <dbReference type="ChEBI" id="CHEBI:17996"/>
    </ligand>
</feature>
<feature type="site" description="Mediates proton transfer from the outer aqueous phase to the interior of the protein; involved in linking H(+) and Cl(-) transport" evidence="1">
    <location>
        <position position="146"/>
    </location>
</feature>
<feature type="site" description="Mediates proton transfer from the protein to the inner aqueous phase" evidence="1">
    <location>
        <position position="201"/>
    </location>
</feature>
<evidence type="ECO:0000255" key="1">
    <source>
        <dbReference type="HAMAP-Rule" id="MF_01128"/>
    </source>
</evidence>
<reference key="1">
    <citation type="journal article" date="2000" name="Nature">
        <title>DNA sequence of both chromosomes of the cholera pathogen Vibrio cholerae.</title>
        <authorList>
            <person name="Heidelberg J.F."/>
            <person name="Eisen J.A."/>
            <person name="Nelson W.C."/>
            <person name="Clayton R.A."/>
            <person name="Gwinn M.L."/>
            <person name="Dodson R.J."/>
            <person name="Haft D.H."/>
            <person name="Hickey E.K."/>
            <person name="Peterson J.D."/>
            <person name="Umayam L.A."/>
            <person name="Gill S.R."/>
            <person name="Nelson K.E."/>
            <person name="Read T.D."/>
            <person name="Tettelin H."/>
            <person name="Richardson D.L."/>
            <person name="Ermolaeva M.D."/>
            <person name="Vamathevan J.J."/>
            <person name="Bass S."/>
            <person name="Qin H."/>
            <person name="Dragoi I."/>
            <person name="Sellers P."/>
            <person name="McDonald L.A."/>
            <person name="Utterback T.R."/>
            <person name="Fleischmann R.D."/>
            <person name="Nierman W.C."/>
            <person name="White O."/>
            <person name="Salzberg S.L."/>
            <person name="Smith H.O."/>
            <person name="Colwell R.R."/>
            <person name="Mekalanos J.J."/>
            <person name="Venter J.C."/>
            <person name="Fraser C.M."/>
        </authorList>
    </citation>
    <scope>NUCLEOTIDE SEQUENCE [LARGE SCALE GENOMIC DNA]</scope>
    <source>
        <strain>ATCC 39315 / El Tor Inaba N16961</strain>
    </source>
</reference>
<gene>
    <name evidence="1" type="primary">clcA</name>
    <name type="ordered locus">VC_A0526</name>
</gene>